<dbReference type="EMBL" id="AB017063">
    <property type="protein sequence ID" value="BAB08746.1"/>
    <property type="molecule type" value="Genomic_DNA"/>
</dbReference>
<dbReference type="EMBL" id="CP002688">
    <property type="protein sequence ID" value="AED96020.1"/>
    <property type="molecule type" value="Genomic_DNA"/>
</dbReference>
<dbReference type="RefSeq" id="NP_199913.1">
    <property type="nucleotide sequence ID" value="NM_124479.1"/>
</dbReference>
<dbReference type="FunCoup" id="Q9FI48">
    <property type="interactions" value="1"/>
</dbReference>
<dbReference type="STRING" id="3702.Q9FI48"/>
<dbReference type="PaxDb" id="3702-AT5G51000.1"/>
<dbReference type="EnsemblPlants" id="AT5G51000.1">
    <property type="protein sequence ID" value="AT5G51000.1"/>
    <property type="gene ID" value="AT5G51000"/>
</dbReference>
<dbReference type="GeneID" id="835173"/>
<dbReference type="Gramene" id="AT5G51000.1">
    <property type="protein sequence ID" value="AT5G51000.1"/>
    <property type="gene ID" value="AT5G51000"/>
</dbReference>
<dbReference type="KEGG" id="ath:AT5G51000"/>
<dbReference type="Araport" id="AT5G51000"/>
<dbReference type="TAIR" id="AT5G51000"/>
<dbReference type="HOGENOM" id="CLU_034692_0_0_1"/>
<dbReference type="InParanoid" id="Q9FI48"/>
<dbReference type="OMA" id="VIWITTE"/>
<dbReference type="PhylomeDB" id="Q9FI48"/>
<dbReference type="PRO" id="PR:Q9FI48"/>
<dbReference type="Proteomes" id="UP000006548">
    <property type="component" value="Chromosome 5"/>
</dbReference>
<dbReference type="CDD" id="cd22157">
    <property type="entry name" value="F-box_AtFBW1-like"/>
    <property type="match status" value="1"/>
</dbReference>
<dbReference type="Gene3D" id="1.20.1280.50">
    <property type="match status" value="1"/>
</dbReference>
<dbReference type="InterPro" id="IPR006527">
    <property type="entry name" value="F-box-assoc_dom_typ1"/>
</dbReference>
<dbReference type="InterPro" id="IPR017451">
    <property type="entry name" value="F-box-assoc_interact_dom"/>
</dbReference>
<dbReference type="InterPro" id="IPR036047">
    <property type="entry name" value="F-box-like_dom_sf"/>
</dbReference>
<dbReference type="InterPro" id="IPR001810">
    <property type="entry name" value="F-box_dom"/>
</dbReference>
<dbReference type="InterPro" id="IPR011043">
    <property type="entry name" value="Gal_Oxase/kelch_b-propeller"/>
</dbReference>
<dbReference type="InterPro" id="IPR050796">
    <property type="entry name" value="SCF_F-box_component"/>
</dbReference>
<dbReference type="NCBIfam" id="TIGR01640">
    <property type="entry name" value="F_box_assoc_1"/>
    <property type="match status" value="1"/>
</dbReference>
<dbReference type="PANTHER" id="PTHR31672">
    <property type="entry name" value="BNACNNG10540D PROTEIN"/>
    <property type="match status" value="1"/>
</dbReference>
<dbReference type="PANTHER" id="PTHR31672:SF13">
    <property type="entry name" value="F-BOX PROTEIN CPR30-LIKE"/>
    <property type="match status" value="1"/>
</dbReference>
<dbReference type="Pfam" id="PF00646">
    <property type="entry name" value="F-box"/>
    <property type="match status" value="1"/>
</dbReference>
<dbReference type="Pfam" id="PF07734">
    <property type="entry name" value="FBA_1"/>
    <property type="match status" value="1"/>
</dbReference>
<dbReference type="SMART" id="SM00256">
    <property type="entry name" value="FBOX"/>
    <property type="match status" value="1"/>
</dbReference>
<dbReference type="SUPFAM" id="SSF81383">
    <property type="entry name" value="F-box domain"/>
    <property type="match status" value="1"/>
</dbReference>
<dbReference type="SUPFAM" id="SSF50965">
    <property type="entry name" value="Galactose oxidase, central domain"/>
    <property type="match status" value="1"/>
</dbReference>
<accession>Q9FI48</accession>
<sequence length="378" mass="44153">MSTMSDLFPDLVEEILSRVPITSLKAVKLTCKQWNDLSKDSSFTKNHYGKEAKEIQVIMICDLKACLMSVNLHNHKDLADPSIKQIGKLNQVEIDSVFHCDGLLLLLLCNPKDNSKLMVWNPYLGQTRWIQPRNNSHKHRPAGRFNHRPAGRFYMGYDSNNNHKILWFSSMYREYEIYDFKSDAWTVIDVNTDQDHIIDNQRVSLKGNVYFIAHDILKEEAFLLSFDFTCERFGPSLPLPFHCCHEDTVLLSTVREEQLAVLFQKSDAYEMGIWITTKIELNIVLWSKFLKVDMTLPNSYWFEDLSFFLVDEKKKVAMVSELDIETCKNYKTYILGENGYYREVDLRKSKGCVYLCVLMFQVWCKSSKVPVLARCERK</sequence>
<name>FB288_ARATH</name>
<gene>
    <name type="ordered locus">At5g51000</name>
    <name type="ORF">K3K7.17</name>
</gene>
<protein>
    <recommendedName>
        <fullName>Putative F-box protein At5g51000</fullName>
    </recommendedName>
</protein>
<feature type="chain" id="PRO_0000283554" description="Putative F-box protein At5g51000">
    <location>
        <begin position="1"/>
        <end position="378"/>
    </location>
</feature>
<feature type="domain" description="F-box">
    <location>
        <begin position="1"/>
        <end position="47"/>
    </location>
</feature>
<reference key="1">
    <citation type="journal article" date="1999" name="DNA Res.">
        <title>Structural analysis of Arabidopsis thaliana chromosome 5. IX. Sequence features of the regions of 1,011,550 bp covered by seventeen P1 and TAC clones.</title>
        <authorList>
            <person name="Kaneko T."/>
            <person name="Katoh T."/>
            <person name="Sato S."/>
            <person name="Nakamura Y."/>
            <person name="Asamizu E."/>
            <person name="Kotani H."/>
            <person name="Miyajima N."/>
            <person name="Tabata S."/>
        </authorList>
    </citation>
    <scope>NUCLEOTIDE SEQUENCE [LARGE SCALE GENOMIC DNA]</scope>
    <source>
        <strain>cv. Columbia</strain>
    </source>
</reference>
<reference key="2">
    <citation type="journal article" date="2017" name="Plant J.">
        <title>Araport11: a complete reannotation of the Arabidopsis thaliana reference genome.</title>
        <authorList>
            <person name="Cheng C.Y."/>
            <person name="Krishnakumar V."/>
            <person name="Chan A.P."/>
            <person name="Thibaud-Nissen F."/>
            <person name="Schobel S."/>
            <person name="Town C.D."/>
        </authorList>
    </citation>
    <scope>GENOME REANNOTATION</scope>
    <source>
        <strain>cv. Columbia</strain>
    </source>
</reference>
<keyword id="KW-1185">Reference proteome</keyword>
<organism>
    <name type="scientific">Arabidopsis thaliana</name>
    <name type="common">Mouse-ear cress</name>
    <dbReference type="NCBI Taxonomy" id="3702"/>
    <lineage>
        <taxon>Eukaryota</taxon>
        <taxon>Viridiplantae</taxon>
        <taxon>Streptophyta</taxon>
        <taxon>Embryophyta</taxon>
        <taxon>Tracheophyta</taxon>
        <taxon>Spermatophyta</taxon>
        <taxon>Magnoliopsida</taxon>
        <taxon>eudicotyledons</taxon>
        <taxon>Gunneridae</taxon>
        <taxon>Pentapetalae</taxon>
        <taxon>rosids</taxon>
        <taxon>malvids</taxon>
        <taxon>Brassicales</taxon>
        <taxon>Brassicaceae</taxon>
        <taxon>Camelineae</taxon>
        <taxon>Arabidopsis</taxon>
    </lineage>
</organism>
<proteinExistence type="predicted"/>